<feature type="chain" id="PRO_0000126634" description="Phosphatase and actin regulator 1">
    <location>
        <begin position="1"/>
        <end position="580"/>
    </location>
</feature>
<feature type="repeat" description="RPEL 1">
    <location>
        <begin position="138"/>
        <end position="163"/>
    </location>
</feature>
<feature type="repeat" description="RPEL 2">
    <location>
        <begin position="422"/>
        <end position="447"/>
    </location>
</feature>
<feature type="repeat" description="RPEL 3">
    <location>
        <begin position="460"/>
        <end position="484"/>
    </location>
</feature>
<feature type="repeat" description="RPEL 4">
    <location>
        <begin position="498"/>
        <end position="523"/>
    </location>
</feature>
<feature type="region of interest" description="Disordered" evidence="3">
    <location>
        <begin position="331"/>
        <end position="355"/>
    </location>
</feature>
<feature type="region of interest" description="Disordered" evidence="3">
    <location>
        <begin position="376"/>
        <end position="410"/>
    </location>
</feature>
<feature type="region of interest" description="Disordered" evidence="3">
    <location>
        <begin position="462"/>
        <end position="494"/>
    </location>
</feature>
<feature type="short sequence motif" description="Nuclear localization signal" evidence="1">
    <location>
        <begin position="108"/>
        <end position="129"/>
    </location>
</feature>
<feature type="compositionally biased region" description="Polar residues" evidence="3">
    <location>
        <begin position="335"/>
        <end position="345"/>
    </location>
</feature>
<feature type="compositionally biased region" description="Acidic residues" evidence="3">
    <location>
        <begin position="395"/>
        <end position="407"/>
    </location>
</feature>
<feature type="compositionally biased region" description="Basic and acidic residues" evidence="3">
    <location>
        <begin position="471"/>
        <end position="494"/>
    </location>
</feature>
<feature type="modified residue" description="Phosphoserine" evidence="2">
    <location>
        <position position="67"/>
    </location>
</feature>
<feature type="modified residue" description="Phosphoserine" evidence="2">
    <location>
        <position position="78"/>
    </location>
</feature>
<feature type="modified residue" description="Phosphothreonine" evidence="2">
    <location>
        <position position="104"/>
    </location>
</feature>
<feature type="modified residue" description="Phosphoserine" evidence="10">
    <location>
        <position position="467"/>
    </location>
</feature>
<feature type="modified residue" description="Phosphoserine" evidence="10">
    <location>
        <position position="505"/>
    </location>
</feature>
<feature type="splice variant" id="VSP_018529" description="In isoform 2." evidence="8">
    <original>PR</original>
    <variation>RK</variation>
    <location>
        <begin position="483"/>
        <end position="484"/>
    </location>
</feature>
<feature type="splice variant" id="VSP_018530" description="In isoform 2." evidence="8">
    <location>
        <begin position="485"/>
        <end position="580"/>
    </location>
</feature>
<feature type="sequence variant" id="VAR_053645" description="In dbSNP:rs17602409.">
    <original>I</original>
    <variation>M</variation>
    <location>
        <position position="247"/>
    </location>
</feature>
<feature type="sequence variant" id="VAR_081810" description="In DEE70; severely impaired interaction with actin; dbSNP:rs1562103192." evidence="7">
    <original>N</original>
    <variation>I</variation>
    <location>
        <position position="479"/>
    </location>
</feature>
<feature type="sequence variant" id="VAR_081811" description="In DEE70; severely impaired interaction with actin; dbSNP:rs1562114406." evidence="7">
    <original>L</original>
    <variation>P</variation>
    <location>
        <position position="500"/>
    </location>
</feature>
<feature type="sequence variant" id="VAR_069379" description="In DEE70; loss of interaction with PP1 complex; dbSNP:rs748743403." evidence="6 7">
    <original>R</original>
    <variation>C</variation>
    <location>
        <position position="521"/>
    </location>
</feature>
<feature type="strand" evidence="11">
    <location>
        <begin position="527"/>
        <end position="530"/>
    </location>
</feature>
<feature type="helix" evidence="11">
    <location>
        <begin position="541"/>
        <end position="543"/>
    </location>
</feature>
<feature type="helix" evidence="11">
    <location>
        <begin position="547"/>
        <end position="563"/>
    </location>
</feature>
<feature type="helix" evidence="11">
    <location>
        <begin position="569"/>
        <end position="574"/>
    </location>
</feature>
<gene>
    <name type="primary">PHACTR1</name>
    <name type="synonym">KIAA1733</name>
    <name type="synonym">RPEL1</name>
</gene>
<sequence length="580" mass="66308">MDYPKMDYFLDVESAHRLLDVESAQRFFYSQGAQARRATLLLPPTLMAASSEDDIDRRPIRRVRSKSDTPYLAEARISFNLGAAEEVERLAAMRSDSLVPGTHTPPIRRRSKFANLGRIFKPWKWRKKKSEKFKHTSAALERKISMRQSREELIKRGVLKEIYDKDGELSISNEEDSLENGQSLSSSQLSLPALSEMEPVPMPRDPCSYEVLQPSDIMDGPDPGAPVKLPCLPVKLSPPLPPKKVMICMPVGGPDLSLVSYTAQKSGQQGVAQHHHTVLPSQIQHQLQYGSHGQHLPSTTGSLPMHPSGCRMIDELNKTLAMTMQRLESSEQRVPCSTSYHSSGLHSGDGVTKAGPMGLPEIRQVPTVVIECDDNKENVPHESDYEDSSCLYTREEEEEEEDEDDDSSLYTSSLAMKVCRKDSLAIKLSNRPSKRELEEKNILPRQTDEERLELRQQIGTKLTRRLSQRPTAEELEQRNILKPRNEQEEQEEKREIKRRLTRKLSQRPTVEELRERKILIRFSDYVEVADAQDYDRRADKPWTRLTAADKAAIRKELNEFKSTEMEVHELSRHLTRFHRP</sequence>
<organism>
    <name type="scientific">Homo sapiens</name>
    <name type="common">Human</name>
    <dbReference type="NCBI Taxonomy" id="9606"/>
    <lineage>
        <taxon>Eukaryota</taxon>
        <taxon>Metazoa</taxon>
        <taxon>Chordata</taxon>
        <taxon>Craniata</taxon>
        <taxon>Vertebrata</taxon>
        <taxon>Euteleostomi</taxon>
        <taxon>Mammalia</taxon>
        <taxon>Eutheria</taxon>
        <taxon>Euarchontoglires</taxon>
        <taxon>Primates</taxon>
        <taxon>Haplorrhini</taxon>
        <taxon>Catarrhini</taxon>
        <taxon>Hominidae</taxon>
        <taxon>Homo</taxon>
    </lineage>
</organism>
<accession>Q9C0D0</accession>
<accession>A8K1V2</accession>
<accession>Q3MJ93</accession>
<accession>Q5JSJ2</accession>
<dbReference type="EMBL" id="AB051520">
    <property type="protein sequence ID" value="BAB21824.1"/>
    <property type="status" value="ALT_INIT"/>
    <property type="molecule type" value="mRNA"/>
</dbReference>
<dbReference type="EMBL" id="AK090769">
    <property type="protein sequence ID" value="BAG52223.1"/>
    <property type="molecule type" value="mRNA"/>
</dbReference>
<dbReference type="EMBL" id="AK290017">
    <property type="protein sequence ID" value="BAF82706.1"/>
    <property type="molecule type" value="mRNA"/>
</dbReference>
<dbReference type="EMBL" id="AL008729">
    <property type="status" value="NOT_ANNOTATED_CDS"/>
    <property type="molecule type" value="Genomic_DNA"/>
</dbReference>
<dbReference type="EMBL" id="AL354680">
    <property type="status" value="NOT_ANNOTATED_CDS"/>
    <property type="molecule type" value="Genomic_DNA"/>
</dbReference>
<dbReference type="EMBL" id="AL391385">
    <property type="status" value="NOT_ANNOTATED_CDS"/>
    <property type="molecule type" value="Genomic_DNA"/>
</dbReference>
<dbReference type="EMBL" id="AL591682">
    <property type="status" value="NOT_ANNOTATED_CDS"/>
    <property type="molecule type" value="Genomic_DNA"/>
</dbReference>
<dbReference type="EMBL" id="Z99495">
    <property type="status" value="NOT_ANNOTATED_CDS"/>
    <property type="molecule type" value="Genomic_DNA"/>
</dbReference>
<dbReference type="EMBL" id="BC101526">
    <property type="protein sequence ID" value="AAI01527.1"/>
    <property type="molecule type" value="mRNA"/>
</dbReference>
<dbReference type="EMBL" id="BC101528">
    <property type="protein sequence ID" value="AAI01529.1"/>
    <property type="molecule type" value="mRNA"/>
</dbReference>
<dbReference type="CCDS" id="CCDS75401.1">
    <molecule id="Q9C0D0-1"/>
</dbReference>
<dbReference type="RefSeq" id="NP_001229577.1">
    <molecule id="Q9C0D0-1"/>
    <property type="nucleotide sequence ID" value="NM_001242648.4"/>
</dbReference>
<dbReference type="RefSeq" id="NP_001309237.1">
    <molecule id="Q9C0D0-1"/>
    <property type="nucleotide sequence ID" value="NM_001322308.3"/>
</dbReference>
<dbReference type="RefSeq" id="NP_001309238.1">
    <molecule id="Q9C0D0-1"/>
    <property type="nucleotide sequence ID" value="NM_001322309.3"/>
</dbReference>
<dbReference type="RefSeq" id="NP_001309239.1">
    <property type="nucleotide sequence ID" value="NM_001322310.1"/>
</dbReference>
<dbReference type="RefSeq" id="NP_001309240.1">
    <property type="nucleotide sequence ID" value="NM_001322311.1"/>
</dbReference>
<dbReference type="RefSeq" id="NP_001309241.1">
    <property type="nucleotide sequence ID" value="NM_001322312.1"/>
</dbReference>
<dbReference type="RefSeq" id="NP_001309242.1">
    <property type="nucleotide sequence ID" value="NM_001322313.1"/>
</dbReference>
<dbReference type="RefSeq" id="NP_001309243.1">
    <property type="nucleotide sequence ID" value="NM_001322314.1"/>
</dbReference>
<dbReference type="RefSeq" id="NP_112210.1">
    <molecule id="Q9C0D0-1"/>
    <property type="nucleotide sequence ID" value="NM_030948.6"/>
</dbReference>
<dbReference type="PDB" id="6ZEE">
    <property type="method" value="X-ray"/>
    <property type="resolution" value="1.90 A"/>
    <property type="chains" value="C/D/U/V/W/X=508-580"/>
</dbReference>
<dbReference type="PDB" id="6ZEF">
    <property type="method" value="X-ray"/>
    <property type="resolution" value="1.94 A"/>
    <property type="chains" value="C/D=516-580"/>
</dbReference>
<dbReference type="PDB" id="6ZEG">
    <property type="method" value="X-ray"/>
    <property type="resolution" value="1.09 A"/>
    <property type="chains" value="C/D=516-580"/>
</dbReference>
<dbReference type="PDB" id="6ZEH">
    <property type="method" value="X-ray"/>
    <property type="resolution" value="1.30 A"/>
    <property type="chains" value="C/D=516-580"/>
</dbReference>
<dbReference type="PDB" id="6ZEI">
    <property type="method" value="X-ray"/>
    <property type="resolution" value="1.39 A"/>
    <property type="chains" value="C/D=516-580"/>
</dbReference>
<dbReference type="PDB" id="6ZEJ">
    <property type="method" value="X-ray"/>
    <property type="resolution" value="1.78 A"/>
    <property type="chains" value="A/D/F/I/L/O=526-580"/>
</dbReference>
<dbReference type="PDBsum" id="6ZEE"/>
<dbReference type="PDBsum" id="6ZEF"/>
<dbReference type="PDBsum" id="6ZEG"/>
<dbReference type="PDBsum" id="6ZEH"/>
<dbReference type="PDBsum" id="6ZEI"/>
<dbReference type="PDBsum" id="6ZEJ"/>
<dbReference type="SMR" id="Q9C0D0"/>
<dbReference type="BioGRID" id="128746">
    <property type="interactions" value="8"/>
</dbReference>
<dbReference type="FunCoup" id="Q9C0D0">
    <property type="interactions" value="1981"/>
</dbReference>
<dbReference type="IntAct" id="Q9C0D0">
    <property type="interactions" value="5"/>
</dbReference>
<dbReference type="MINT" id="Q9C0D0"/>
<dbReference type="STRING" id="9606.ENSP00000329880"/>
<dbReference type="iPTMnet" id="Q9C0D0"/>
<dbReference type="PhosphoSitePlus" id="Q9C0D0"/>
<dbReference type="SwissPalm" id="Q9C0D0"/>
<dbReference type="BioMuta" id="PHACTR1"/>
<dbReference type="DMDM" id="97536946"/>
<dbReference type="jPOST" id="Q9C0D0"/>
<dbReference type="MassIVE" id="Q9C0D0"/>
<dbReference type="PaxDb" id="9606-ENSP00000329880"/>
<dbReference type="PeptideAtlas" id="Q9C0D0"/>
<dbReference type="ProteomicsDB" id="80005">
    <molecule id="Q9C0D0-1"/>
</dbReference>
<dbReference type="ProteomicsDB" id="80006">
    <molecule id="Q9C0D0-2"/>
</dbReference>
<dbReference type="TopDownProteomics" id="Q9C0D0-2">
    <molecule id="Q9C0D0-2"/>
</dbReference>
<dbReference type="Antibodypedia" id="24916">
    <property type="antibodies" value="64 antibodies from 21 providers"/>
</dbReference>
<dbReference type="DNASU" id="221692"/>
<dbReference type="Ensembl" id="ENST00000332995.12">
    <molecule id="Q9C0D0-1"/>
    <property type="protein sequence ID" value="ENSP00000329880.8"/>
    <property type="gene ID" value="ENSG00000112137.19"/>
</dbReference>
<dbReference type="Ensembl" id="ENST00000674637.1">
    <molecule id="Q9C0D0-1"/>
    <property type="protein sequence ID" value="ENSP00000501634.1"/>
    <property type="gene ID" value="ENSG00000112137.19"/>
</dbReference>
<dbReference type="Ensembl" id="ENST00000676159.1">
    <molecule id="Q9C0D0-1"/>
    <property type="protein sequence ID" value="ENSP00000501921.1"/>
    <property type="gene ID" value="ENSG00000112137.19"/>
</dbReference>
<dbReference type="GeneID" id="221692"/>
<dbReference type="KEGG" id="hsa:221692"/>
<dbReference type="MANE-Select" id="ENST00000332995.12">
    <property type="protein sequence ID" value="ENSP00000329880.8"/>
    <property type="RefSeq nucleotide sequence ID" value="NM_030948.6"/>
    <property type="RefSeq protein sequence ID" value="NP_112210.1"/>
</dbReference>
<dbReference type="UCSC" id="uc003nag.3">
    <molecule id="Q9C0D0-1"/>
    <property type="organism name" value="human"/>
</dbReference>
<dbReference type="AGR" id="HGNC:20990"/>
<dbReference type="CTD" id="221692"/>
<dbReference type="DisGeNET" id="221692"/>
<dbReference type="GeneCards" id="PHACTR1"/>
<dbReference type="HGNC" id="HGNC:20990">
    <property type="gene designation" value="PHACTR1"/>
</dbReference>
<dbReference type="HPA" id="ENSG00000112137">
    <property type="expression patterns" value="Tissue enhanced (bone marrow, brain)"/>
</dbReference>
<dbReference type="MalaCards" id="PHACTR1"/>
<dbReference type="MIM" id="608723">
    <property type="type" value="gene"/>
</dbReference>
<dbReference type="MIM" id="618298">
    <property type="type" value="phenotype"/>
</dbReference>
<dbReference type="neXtProt" id="NX_Q9C0D0"/>
<dbReference type="OpenTargets" id="ENSG00000112137"/>
<dbReference type="Orphanet" id="3451">
    <property type="disease" value="Infantile epileptic spasms syndrome"/>
</dbReference>
<dbReference type="PharmGKB" id="PA134923900"/>
<dbReference type="VEuPathDB" id="HostDB:ENSG00000112137"/>
<dbReference type="eggNOG" id="KOG4339">
    <property type="taxonomic scope" value="Eukaryota"/>
</dbReference>
<dbReference type="GeneTree" id="ENSGT00940000155842"/>
<dbReference type="InParanoid" id="Q9C0D0"/>
<dbReference type="OrthoDB" id="5563016at2759"/>
<dbReference type="PAN-GO" id="Q9C0D0">
    <property type="GO annotations" value="3 GO annotations based on evolutionary models"/>
</dbReference>
<dbReference type="PhylomeDB" id="Q9C0D0"/>
<dbReference type="PathwayCommons" id="Q9C0D0"/>
<dbReference type="SignaLink" id="Q9C0D0"/>
<dbReference type="SIGNOR" id="Q9C0D0"/>
<dbReference type="BioGRID-ORCS" id="221692">
    <property type="hits" value="9 hits in 393 CRISPR screens"/>
</dbReference>
<dbReference type="CD-CODE" id="FB4E32DD">
    <property type="entry name" value="Presynaptic clusters and postsynaptic densities"/>
</dbReference>
<dbReference type="ChiTaRS" id="PHACTR1">
    <property type="organism name" value="human"/>
</dbReference>
<dbReference type="GenomeRNAi" id="221692"/>
<dbReference type="Pharos" id="Q9C0D0">
    <property type="development level" value="Tbio"/>
</dbReference>
<dbReference type="PRO" id="PR:Q9C0D0"/>
<dbReference type="Proteomes" id="UP000005640">
    <property type="component" value="Chromosome 6"/>
</dbReference>
<dbReference type="RNAct" id="Q9C0D0">
    <property type="molecule type" value="protein"/>
</dbReference>
<dbReference type="Bgee" id="ENSG00000112137">
    <property type="expression patterns" value="Expressed in cortical plate and 135 other cell types or tissues"/>
</dbReference>
<dbReference type="ExpressionAtlas" id="Q9C0D0">
    <property type="expression patterns" value="baseline and differential"/>
</dbReference>
<dbReference type="GO" id="GO:0005829">
    <property type="term" value="C:cytosol"/>
    <property type="evidence" value="ECO:0000250"/>
    <property type="project" value="UniProtKB"/>
</dbReference>
<dbReference type="GO" id="GO:0005634">
    <property type="term" value="C:nucleus"/>
    <property type="evidence" value="ECO:0000250"/>
    <property type="project" value="UniProtKB"/>
</dbReference>
<dbReference type="GO" id="GO:0045202">
    <property type="term" value="C:synapse"/>
    <property type="evidence" value="ECO:0007669"/>
    <property type="project" value="UniProtKB-SubCell"/>
</dbReference>
<dbReference type="GO" id="GO:0003779">
    <property type="term" value="F:actin binding"/>
    <property type="evidence" value="ECO:0000250"/>
    <property type="project" value="UniProtKB"/>
</dbReference>
<dbReference type="GO" id="GO:0004864">
    <property type="term" value="F:protein phosphatase inhibitor activity"/>
    <property type="evidence" value="ECO:0007669"/>
    <property type="project" value="UniProtKB-KW"/>
</dbReference>
<dbReference type="GO" id="GO:0030036">
    <property type="term" value="P:actin cytoskeleton organization"/>
    <property type="evidence" value="ECO:0000250"/>
    <property type="project" value="UniProtKB"/>
</dbReference>
<dbReference type="GO" id="GO:0031032">
    <property type="term" value="P:actomyosin structure organization"/>
    <property type="evidence" value="ECO:0000315"/>
    <property type="project" value="UniProtKB"/>
</dbReference>
<dbReference type="GO" id="GO:0048870">
    <property type="term" value="P:cell motility"/>
    <property type="evidence" value="ECO:0000315"/>
    <property type="project" value="UniProtKB"/>
</dbReference>
<dbReference type="GO" id="GO:0021987">
    <property type="term" value="P:cerebral cortex development"/>
    <property type="evidence" value="ECO:0000250"/>
    <property type="project" value="UniProtKB"/>
</dbReference>
<dbReference type="GO" id="GO:0140059">
    <property type="term" value="P:dendrite arborization"/>
    <property type="evidence" value="ECO:0000250"/>
    <property type="project" value="UniProtKB"/>
</dbReference>
<dbReference type="GO" id="GO:2001222">
    <property type="term" value="P:regulation of neuron migration"/>
    <property type="evidence" value="ECO:0000250"/>
    <property type="project" value="UniProtKB"/>
</dbReference>
<dbReference type="GO" id="GO:0043149">
    <property type="term" value="P:stress fiber assembly"/>
    <property type="evidence" value="ECO:0000315"/>
    <property type="project" value="UniProtKB"/>
</dbReference>
<dbReference type="Gene3D" id="6.10.140.1750">
    <property type="match status" value="1"/>
</dbReference>
<dbReference type="Gene3D" id="6.10.140.2130">
    <property type="match status" value="1"/>
</dbReference>
<dbReference type="InterPro" id="IPR004018">
    <property type="entry name" value="RPEL_repeat"/>
</dbReference>
<dbReference type="PANTHER" id="PTHR12751:SF6">
    <property type="entry name" value="PHOSPHATASE AND ACTIN REGULATOR 1"/>
    <property type="match status" value="1"/>
</dbReference>
<dbReference type="PANTHER" id="PTHR12751">
    <property type="entry name" value="PHOSPHATASE AND ACTIN REGULATOR PHACTR"/>
    <property type="match status" value="1"/>
</dbReference>
<dbReference type="Pfam" id="PF02755">
    <property type="entry name" value="RPEL"/>
    <property type="match status" value="4"/>
</dbReference>
<dbReference type="SMART" id="SM00707">
    <property type="entry name" value="RPEL"/>
    <property type="match status" value="4"/>
</dbReference>
<dbReference type="PROSITE" id="PS51073">
    <property type="entry name" value="RPEL"/>
    <property type="match status" value="4"/>
</dbReference>
<keyword id="KW-0002">3D-structure</keyword>
<keyword id="KW-0009">Actin-binding</keyword>
<keyword id="KW-0025">Alternative splicing</keyword>
<keyword id="KW-0963">Cytoplasm</keyword>
<keyword id="KW-0887">Epilepsy</keyword>
<keyword id="KW-0539">Nucleus</keyword>
<keyword id="KW-0597">Phosphoprotein</keyword>
<keyword id="KW-0650">Protein phosphatase inhibitor</keyword>
<keyword id="KW-1267">Proteomics identification</keyword>
<keyword id="KW-1185">Reference proteome</keyword>
<keyword id="KW-0677">Repeat</keyword>
<keyword id="KW-0770">Synapse</keyword>
<evidence type="ECO:0000250" key="1"/>
<evidence type="ECO:0000250" key="2">
    <source>
        <dbReference type="UniProtKB" id="Q2M3X8"/>
    </source>
</evidence>
<evidence type="ECO:0000256" key="3">
    <source>
        <dbReference type="SAM" id="MobiDB-lite"/>
    </source>
</evidence>
<evidence type="ECO:0000269" key="4">
    <source>
    </source>
</evidence>
<evidence type="ECO:0000269" key="5">
    <source>
    </source>
</evidence>
<evidence type="ECO:0000269" key="6">
    <source>
    </source>
</evidence>
<evidence type="ECO:0000269" key="7">
    <source>
    </source>
</evidence>
<evidence type="ECO:0000303" key="8">
    <source>
    </source>
</evidence>
<evidence type="ECO:0000305" key="9"/>
<evidence type="ECO:0007744" key="10">
    <source>
    </source>
</evidence>
<evidence type="ECO:0007829" key="11">
    <source>
        <dbReference type="PDB" id="6ZEG"/>
    </source>
</evidence>
<comment type="function">
    <text evidence="2 4 5">Binds actin monomers (G actin) and plays a role in multiple processes including the regulation of actin cytoskeleton dynamics, actin stress fibers formation, cell motility and survival, formation of tubules by endothelial cells, and regulation of PPP1CA activity (PubMed:21798305, PubMed:21939755). Involved in the regulation of cortical neuron migration and dendrite arborization (By similarity).</text>
</comment>
<comment type="subunit">
    <text>Interacts (via RPEL repeats) with ACTA1 and PPP1CA; ACTA1 and PPP1CA compete for the same binding site.</text>
</comment>
<comment type="interaction">
    <interactant intactId="EBI-7971325">
        <id>Q9C0D0</id>
    </interactant>
    <interactant intactId="EBI-725606">
        <id>Q9NWQ9</id>
        <label>C14orf119</label>
    </interactant>
    <organismsDiffer>false</organismsDiffer>
    <experiments>3</experiments>
</comment>
<comment type="interaction">
    <interactant intactId="EBI-7971325">
        <id>Q9C0D0</id>
    </interactant>
    <interactant intactId="EBI-712912">
        <id>Q9HC52</id>
        <label>CBX8</label>
    </interactant>
    <organismsDiffer>false</organismsDiffer>
    <experiments>3</experiments>
</comment>
<comment type="subcellular location">
    <subcellularLocation>
        <location evidence="1">Cytoplasm</location>
    </subcellularLocation>
    <subcellularLocation>
        <location evidence="1">Synapse</location>
    </subcellularLocation>
    <subcellularLocation>
        <location evidence="1">Nucleus</location>
    </subcellularLocation>
    <text evidence="1">Enriched at synapses (By similarity). Cytoplasmic in resting cells, and is imported into the nucleus upon serum stimulation. Interaction with actin prevents nuclear import (By similarity).</text>
</comment>
<comment type="alternative products">
    <event type="alternative splicing"/>
    <isoform>
        <id>Q9C0D0-1</id>
        <name>1</name>
        <sequence type="displayed"/>
    </isoform>
    <isoform>
        <id>Q9C0D0-2</id>
        <name>2</name>
        <sequence type="described" ref="VSP_018529 VSP_018530"/>
    </isoform>
</comment>
<comment type="tissue specificity">
    <text evidence="5">Detected in umbilical vein endothelial cells.</text>
</comment>
<comment type="induction">
    <text evidence="4 5">Up-regulated by VEGFA.</text>
</comment>
<comment type="domain">
    <text evidence="1">Binds three actin monomers via the three C-terminal RPEL repeats.</text>
</comment>
<comment type="disease" evidence="6 7">
    <disease id="DI-05450">
        <name>Developmental and epileptic encephalopathy 70</name>
        <acronym>DEE70</acronym>
        <description>A form of epileptic encephalopathy, a heterogeneous group of severe early-onset epilepsies characterized by refractory seizures, neurodevelopmental impairment, and poor prognosis. Development is normal prior to seizure onset, after which cognitive and motor delays become apparent. DEE70 is an autosomal dominant form with onset in first months of life and variable severity.</description>
        <dbReference type="MIM" id="618298"/>
    </disease>
    <text>The disease is caused by variants affecting the gene represented in this entry.</text>
</comment>
<comment type="similarity">
    <text evidence="9">Belongs to the phosphatase and actin regulator family.</text>
</comment>
<comment type="sequence caution" evidence="9">
    <conflict type="erroneous initiation">
        <sequence resource="EMBL-CDS" id="BAB21824"/>
    </conflict>
    <text>Extended N-terminus.</text>
</comment>
<name>PHAR1_HUMAN</name>
<protein>
    <recommendedName>
        <fullName>Phosphatase and actin regulator 1</fullName>
    </recommendedName>
</protein>
<proteinExistence type="evidence at protein level"/>
<reference key="1">
    <citation type="journal article" date="2000" name="DNA Res.">
        <title>Prediction of the coding sequences of unidentified human genes. XIX. The complete sequences of 100 new cDNA clones from brain which code for large proteins in vitro.</title>
        <authorList>
            <person name="Nagase T."/>
            <person name="Kikuno R."/>
            <person name="Hattori A."/>
            <person name="Kondo Y."/>
            <person name="Okumura K."/>
            <person name="Ohara O."/>
        </authorList>
    </citation>
    <scope>NUCLEOTIDE SEQUENCE [LARGE SCALE MRNA] (ISOFORM 2)</scope>
    <source>
        <tissue>Brain</tissue>
    </source>
</reference>
<reference key="2">
    <citation type="journal article" date="2004" name="Nat. Genet.">
        <title>Complete sequencing and characterization of 21,243 full-length human cDNAs.</title>
        <authorList>
            <person name="Ota T."/>
            <person name="Suzuki Y."/>
            <person name="Nishikawa T."/>
            <person name="Otsuki T."/>
            <person name="Sugiyama T."/>
            <person name="Irie R."/>
            <person name="Wakamatsu A."/>
            <person name="Hayashi K."/>
            <person name="Sato H."/>
            <person name="Nagai K."/>
            <person name="Kimura K."/>
            <person name="Makita H."/>
            <person name="Sekine M."/>
            <person name="Obayashi M."/>
            <person name="Nishi T."/>
            <person name="Shibahara T."/>
            <person name="Tanaka T."/>
            <person name="Ishii S."/>
            <person name="Yamamoto J."/>
            <person name="Saito K."/>
            <person name="Kawai Y."/>
            <person name="Isono Y."/>
            <person name="Nakamura Y."/>
            <person name="Nagahari K."/>
            <person name="Murakami K."/>
            <person name="Yasuda T."/>
            <person name="Iwayanagi T."/>
            <person name="Wagatsuma M."/>
            <person name="Shiratori A."/>
            <person name="Sudo H."/>
            <person name="Hosoiri T."/>
            <person name="Kaku Y."/>
            <person name="Kodaira H."/>
            <person name="Kondo H."/>
            <person name="Sugawara M."/>
            <person name="Takahashi M."/>
            <person name="Kanda K."/>
            <person name="Yokoi T."/>
            <person name="Furuya T."/>
            <person name="Kikkawa E."/>
            <person name="Omura Y."/>
            <person name="Abe K."/>
            <person name="Kamihara K."/>
            <person name="Katsuta N."/>
            <person name="Sato K."/>
            <person name="Tanikawa M."/>
            <person name="Yamazaki M."/>
            <person name="Ninomiya K."/>
            <person name="Ishibashi T."/>
            <person name="Yamashita H."/>
            <person name="Murakawa K."/>
            <person name="Fujimori K."/>
            <person name="Tanai H."/>
            <person name="Kimata M."/>
            <person name="Watanabe M."/>
            <person name="Hiraoka S."/>
            <person name="Chiba Y."/>
            <person name="Ishida S."/>
            <person name="Ono Y."/>
            <person name="Takiguchi S."/>
            <person name="Watanabe S."/>
            <person name="Yosida M."/>
            <person name="Hotuta T."/>
            <person name="Kusano J."/>
            <person name="Kanehori K."/>
            <person name="Takahashi-Fujii A."/>
            <person name="Hara H."/>
            <person name="Tanase T.-O."/>
            <person name="Nomura Y."/>
            <person name="Togiya S."/>
            <person name="Komai F."/>
            <person name="Hara R."/>
            <person name="Takeuchi K."/>
            <person name="Arita M."/>
            <person name="Imose N."/>
            <person name="Musashino K."/>
            <person name="Yuuki H."/>
            <person name="Oshima A."/>
            <person name="Sasaki N."/>
            <person name="Aotsuka S."/>
            <person name="Yoshikawa Y."/>
            <person name="Matsunawa H."/>
            <person name="Ichihara T."/>
            <person name="Shiohata N."/>
            <person name="Sano S."/>
            <person name="Moriya S."/>
            <person name="Momiyama H."/>
            <person name="Satoh N."/>
            <person name="Takami S."/>
            <person name="Terashima Y."/>
            <person name="Suzuki O."/>
            <person name="Nakagawa S."/>
            <person name="Senoh A."/>
            <person name="Mizoguchi H."/>
            <person name="Goto Y."/>
            <person name="Shimizu F."/>
            <person name="Wakebe H."/>
            <person name="Hishigaki H."/>
            <person name="Watanabe T."/>
            <person name="Sugiyama A."/>
            <person name="Takemoto M."/>
            <person name="Kawakami B."/>
            <person name="Yamazaki M."/>
            <person name="Watanabe K."/>
            <person name="Kumagai A."/>
            <person name="Itakura S."/>
            <person name="Fukuzumi Y."/>
            <person name="Fujimori Y."/>
            <person name="Komiyama M."/>
            <person name="Tashiro H."/>
            <person name="Tanigami A."/>
            <person name="Fujiwara T."/>
            <person name="Ono T."/>
            <person name="Yamada K."/>
            <person name="Fujii Y."/>
            <person name="Ozaki K."/>
            <person name="Hirao M."/>
            <person name="Ohmori Y."/>
            <person name="Kawabata A."/>
            <person name="Hikiji T."/>
            <person name="Kobatake N."/>
            <person name="Inagaki H."/>
            <person name="Ikema Y."/>
            <person name="Okamoto S."/>
            <person name="Okitani R."/>
            <person name="Kawakami T."/>
            <person name="Noguchi S."/>
            <person name="Itoh T."/>
            <person name="Shigeta K."/>
            <person name="Senba T."/>
            <person name="Matsumura K."/>
            <person name="Nakajima Y."/>
            <person name="Mizuno T."/>
            <person name="Morinaga M."/>
            <person name="Sasaki M."/>
            <person name="Togashi T."/>
            <person name="Oyama M."/>
            <person name="Hata H."/>
            <person name="Watanabe M."/>
            <person name="Komatsu T."/>
            <person name="Mizushima-Sugano J."/>
            <person name="Satoh T."/>
            <person name="Shirai Y."/>
            <person name="Takahashi Y."/>
            <person name="Nakagawa K."/>
            <person name="Okumura K."/>
            <person name="Nagase T."/>
            <person name="Nomura N."/>
            <person name="Kikuchi H."/>
            <person name="Masuho Y."/>
            <person name="Yamashita R."/>
            <person name="Nakai K."/>
            <person name="Yada T."/>
            <person name="Nakamura Y."/>
            <person name="Ohara O."/>
            <person name="Isogai T."/>
            <person name="Sugano S."/>
        </authorList>
    </citation>
    <scope>NUCLEOTIDE SEQUENCE [LARGE SCALE MRNA] (ISOFORM 1)</scope>
    <source>
        <tissue>Amygdala</tissue>
        <tissue>Hippocampus</tissue>
    </source>
</reference>
<reference key="3">
    <citation type="journal article" date="2003" name="Nature">
        <title>The DNA sequence and analysis of human chromosome 6.</title>
        <authorList>
            <person name="Mungall A.J."/>
            <person name="Palmer S.A."/>
            <person name="Sims S.K."/>
            <person name="Edwards C.A."/>
            <person name="Ashurst J.L."/>
            <person name="Wilming L."/>
            <person name="Jones M.C."/>
            <person name="Horton R."/>
            <person name="Hunt S.E."/>
            <person name="Scott C.E."/>
            <person name="Gilbert J.G.R."/>
            <person name="Clamp M.E."/>
            <person name="Bethel G."/>
            <person name="Milne S."/>
            <person name="Ainscough R."/>
            <person name="Almeida J.P."/>
            <person name="Ambrose K.D."/>
            <person name="Andrews T.D."/>
            <person name="Ashwell R.I.S."/>
            <person name="Babbage A.K."/>
            <person name="Bagguley C.L."/>
            <person name="Bailey J."/>
            <person name="Banerjee R."/>
            <person name="Barker D.J."/>
            <person name="Barlow K.F."/>
            <person name="Bates K."/>
            <person name="Beare D.M."/>
            <person name="Beasley H."/>
            <person name="Beasley O."/>
            <person name="Bird C.P."/>
            <person name="Blakey S.E."/>
            <person name="Bray-Allen S."/>
            <person name="Brook J."/>
            <person name="Brown A.J."/>
            <person name="Brown J.Y."/>
            <person name="Burford D.C."/>
            <person name="Burrill W."/>
            <person name="Burton J."/>
            <person name="Carder C."/>
            <person name="Carter N.P."/>
            <person name="Chapman J.C."/>
            <person name="Clark S.Y."/>
            <person name="Clark G."/>
            <person name="Clee C.M."/>
            <person name="Clegg S."/>
            <person name="Cobley V."/>
            <person name="Collier R.E."/>
            <person name="Collins J.E."/>
            <person name="Colman L.K."/>
            <person name="Corby N.R."/>
            <person name="Coville G.J."/>
            <person name="Culley K.M."/>
            <person name="Dhami P."/>
            <person name="Davies J."/>
            <person name="Dunn M."/>
            <person name="Earthrowl M.E."/>
            <person name="Ellington A.E."/>
            <person name="Evans K.A."/>
            <person name="Faulkner L."/>
            <person name="Francis M.D."/>
            <person name="Frankish A."/>
            <person name="Frankland J."/>
            <person name="French L."/>
            <person name="Garner P."/>
            <person name="Garnett J."/>
            <person name="Ghori M.J."/>
            <person name="Gilby L.M."/>
            <person name="Gillson C.J."/>
            <person name="Glithero R.J."/>
            <person name="Grafham D.V."/>
            <person name="Grant M."/>
            <person name="Gribble S."/>
            <person name="Griffiths C."/>
            <person name="Griffiths M.N.D."/>
            <person name="Hall R."/>
            <person name="Halls K.S."/>
            <person name="Hammond S."/>
            <person name="Harley J.L."/>
            <person name="Hart E.A."/>
            <person name="Heath P.D."/>
            <person name="Heathcott R."/>
            <person name="Holmes S.J."/>
            <person name="Howden P.J."/>
            <person name="Howe K.L."/>
            <person name="Howell G.R."/>
            <person name="Huckle E."/>
            <person name="Humphray S.J."/>
            <person name="Humphries M.D."/>
            <person name="Hunt A.R."/>
            <person name="Johnson C.M."/>
            <person name="Joy A.A."/>
            <person name="Kay M."/>
            <person name="Keenan S.J."/>
            <person name="Kimberley A.M."/>
            <person name="King A."/>
            <person name="Laird G.K."/>
            <person name="Langford C."/>
            <person name="Lawlor S."/>
            <person name="Leongamornlert D.A."/>
            <person name="Leversha M."/>
            <person name="Lloyd C.R."/>
            <person name="Lloyd D.M."/>
            <person name="Loveland J.E."/>
            <person name="Lovell J."/>
            <person name="Martin S."/>
            <person name="Mashreghi-Mohammadi M."/>
            <person name="Maslen G.L."/>
            <person name="Matthews L."/>
            <person name="McCann O.T."/>
            <person name="McLaren S.J."/>
            <person name="McLay K."/>
            <person name="McMurray A."/>
            <person name="Moore M.J.F."/>
            <person name="Mullikin J.C."/>
            <person name="Niblett D."/>
            <person name="Nickerson T."/>
            <person name="Novik K.L."/>
            <person name="Oliver K."/>
            <person name="Overton-Larty E.K."/>
            <person name="Parker A."/>
            <person name="Patel R."/>
            <person name="Pearce A.V."/>
            <person name="Peck A.I."/>
            <person name="Phillimore B.J.C.T."/>
            <person name="Phillips S."/>
            <person name="Plumb R.W."/>
            <person name="Porter K.M."/>
            <person name="Ramsey Y."/>
            <person name="Ranby S.A."/>
            <person name="Rice C.M."/>
            <person name="Ross M.T."/>
            <person name="Searle S.M."/>
            <person name="Sehra H.K."/>
            <person name="Sheridan E."/>
            <person name="Skuce C.D."/>
            <person name="Smith S."/>
            <person name="Smith M."/>
            <person name="Spraggon L."/>
            <person name="Squares S.L."/>
            <person name="Steward C.A."/>
            <person name="Sycamore N."/>
            <person name="Tamlyn-Hall G."/>
            <person name="Tester J."/>
            <person name="Theaker A.J."/>
            <person name="Thomas D.W."/>
            <person name="Thorpe A."/>
            <person name="Tracey A."/>
            <person name="Tromans A."/>
            <person name="Tubby B."/>
            <person name="Wall M."/>
            <person name="Wallis J.M."/>
            <person name="West A.P."/>
            <person name="White S.S."/>
            <person name="Whitehead S.L."/>
            <person name="Whittaker H."/>
            <person name="Wild A."/>
            <person name="Willey D.J."/>
            <person name="Wilmer T.E."/>
            <person name="Wood J.M."/>
            <person name="Wray P.W."/>
            <person name="Wyatt J.C."/>
            <person name="Young L."/>
            <person name="Younger R.M."/>
            <person name="Bentley D.R."/>
            <person name="Coulson A."/>
            <person name="Durbin R.M."/>
            <person name="Hubbard T."/>
            <person name="Sulston J.E."/>
            <person name="Dunham I."/>
            <person name="Rogers J."/>
            <person name="Beck S."/>
        </authorList>
    </citation>
    <scope>NUCLEOTIDE SEQUENCE [LARGE SCALE GENOMIC DNA]</scope>
</reference>
<reference key="4">
    <citation type="journal article" date="2004" name="Genome Res.">
        <title>The status, quality, and expansion of the NIH full-length cDNA project: the Mammalian Gene Collection (MGC).</title>
        <authorList>
            <consortium name="The MGC Project Team"/>
        </authorList>
    </citation>
    <scope>NUCLEOTIDE SEQUENCE [LARGE SCALE MRNA] (ISOFORM 1)</scope>
    <source>
        <tissue>Cerebellum</tissue>
    </source>
</reference>
<reference key="5">
    <citation type="journal article" date="2011" name="Biochimie">
        <title>Depletion of the novel protein PHACTR-1 from human endothelial cells abolishes tube formation and induces cell death receptor apoptosis.</title>
        <authorList>
            <person name="Jarray R."/>
            <person name="Allain B."/>
            <person name="Borriello L."/>
            <person name="Biard D."/>
            <person name="Loukaci A."/>
            <person name="Larghero J."/>
            <person name="Hadj-Slimane R."/>
            <person name="Garbay C."/>
            <person name="Lepelletier Y."/>
            <person name="Raynaud F."/>
        </authorList>
    </citation>
    <scope>FUNCTION</scope>
    <scope>INDUCTION</scope>
</reference>
<reference key="6">
    <citation type="journal article" date="2012" name="Cell. Signal.">
        <title>Neuropilin-1 regulates a new VEGF-induced gene, Phactr-1, which controls tubulogenesis and modulates lamellipodial dynamics in human endothelial cells.</title>
        <authorList>
            <person name="Allain B."/>
            <person name="Jarray R."/>
            <person name="Borriello L."/>
            <person name="Leforban B."/>
            <person name="Dufour S."/>
            <person name="Liu W.Q."/>
            <person name="Pamonsinlapatham P."/>
            <person name="Bianco S."/>
            <person name="Larghero J."/>
            <person name="Hadj-Slimane R."/>
            <person name="Garbay C."/>
            <person name="Raynaud F."/>
            <person name="Lepelletier Y."/>
        </authorList>
    </citation>
    <scope>FUNCTION</scope>
    <scope>TISSUE SPECIFICITY</scope>
    <scope>INDUCTION</scope>
</reference>
<reference key="7">
    <citation type="journal article" date="2013" name="J. Proteome Res.">
        <title>Toward a comprehensive characterization of a human cancer cell phosphoproteome.</title>
        <authorList>
            <person name="Zhou H."/>
            <person name="Di Palma S."/>
            <person name="Preisinger C."/>
            <person name="Peng M."/>
            <person name="Polat A.N."/>
            <person name="Heck A.J."/>
            <person name="Mohammed S."/>
        </authorList>
    </citation>
    <scope>PHOSPHORYLATION [LARGE SCALE ANALYSIS] AT SER-467 AND SER-505</scope>
    <scope>IDENTIFICATION BY MASS SPECTROMETRY [LARGE SCALE ANALYSIS]</scope>
    <source>
        <tissue>Erythroleukemia</tissue>
    </source>
</reference>
<reference key="8">
    <citation type="journal article" date="2018" name="Brain">
        <title>De novo PHACTR1 mutations in West syndrome and their pathophysiological effects.</title>
        <authorList>
            <person name="Hamada N."/>
            <person name="Ogaya S."/>
            <person name="Nakashima M."/>
            <person name="Nishijo T."/>
            <person name="Sugawara Y."/>
            <person name="Iwamoto I."/>
            <person name="Ito H."/>
            <person name="Maki Y."/>
            <person name="Shirai K."/>
            <person name="Baba S."/>
            <person name="Maruyama K."/>
            <person name="Saitsu H."/>
            <person name="Kato M."/>
            <person name="Matsumoto N."/>
            <person name="Momiyama T."/>
            <person name="Nagata K.I."/>
        </authorList>
    </citation>
    <scope>INVOLVEMENT IN DEE70</scope>
    <scope>VARIANTS DEE70 ILE-479 AND PRO-500</scope>
    <scope>CHARACTERIZATION OF VARIANTS DEE70 ILE-479; PRO-500 AND CYS-521</scope>
</reference>
<reference key="9">
    <citation type="journal article" date="2012" name="N. Engl. J. Med.">
        <title>Diagnostic exome sequencing in persons with severe intellectual disability.</title>
        <authorList>
            <person name="de Ligt J."/>
            <person name="Willemsen M.H."/>
            <person name="van Bon B.W."/>
            <person name="Kleefstra T."/>
            <person name="Yntema H.G."/>
            <person name="Kroes T."/>
            <person name="Vulto-van Silfhout A.T."/>
            <person name="Koolen D.A."/>
            <person name="de Vries P."/>
            <person name="Gilissen C."/>
            <person name="del Rosario M."/>
            <person name="Hoischen A."/>
            <person name="Scheffer H."/>
            <person name="de Vries B.B."/>
            <person name="Brunner H.G."/>
            <person name="Veltman J.A."/>
            <person name="Vissers L.E."/>
        </authorList>
    </citation>
    <scope>VARIANT DEE70 CYS-521</scope>
</reference>